<reference key="1">
    <citation type="journal article" date="2002" name="Nature">
        <title>Comparison of the genomes of two Xanthomonas pathogens with differing host specificities.</title>
        <authorList>
            <person name="da Silva A.C.R."/>
            <person name="Ferro J.A."/>
            <person name="Reinach F.C."/>
            <person name="Farah C.S."/>
            <person name="Furlan L.R."/>
            <person name="Quaggio R.B."/>
            <person name="Monteiro-Vitorello C.B."/>
            <person name="Van Sluys M.A."/>
            <person name="Almeida N.F. Jr."/>
            <person name="Alves L.M.C."/>
            <person name="do Amaral A.M."/>
            <person name="Bertolini M.C."/>
            <person name="Camargo L.E.A."/>
            <person name="Camarotte G."/>
            <person name="Cannavan F."/>
            <person name="Cardozo J."/>
            <person name="Chambergo F."/>
            <person name="Ciapina L.P."/>
            <person name="Cicarelli R.M.B."/>
            <person name="Coutinho L.L."/>
            <person name="Cursino-Santos J.R."/>
            <person name="El-Dorry H."/>
            <person name="Faria J.B."/>
            <person name="Ferreira A.J.S."/>
            <person name="Ferreira R.C.C."/>
            <person name="Ferro M.I.T."/>
            <person name="Formighieri E.F."/>
            <person name="Franco M.C."/>
            <person name="Greggio C.C."/>
            <person name="Gruber A."/>
            <person name="Katsuyama A.M."/>
            <person name="Kishi L.T."/>
            <person name="Leite R.P."/>
            <person name="Lemos E.G.M."/>
            <person name="Lemos M.V.F."/>
            <person name="Locali E.C."/>
            <person name="Machado M.A."/>
            <person name="Madeira A.M.B.N."/>
            <person name="Martinez-Rossi N.M."/>
            <person name="Martins E.C."/>
            <person name="Meidanis J."/>
            <person name="Menck C.F.M."/>
            <person name="Miyaki C.Y."/>
            <person name="Moon D.H."/>
            <person name="Moreira L.M."/>
            <person name="Novo M.T.M."/>
            <person name="Okura V.K."/>
            <person name="Oliveira M.C."/>
            <person name="Oliveira V.R."/>
            <person name="Pereira H.A."/>
            <person name="Rossi A."/>
            <person name="Sena J.A.D."/>
            <person name="Silva C."/>
            <person name="de Souza R.F."/>
            <person name="Spinola L.A.F."/>
            <person name="Takita M.A."/>
            <person name="Tamura R.E."/>
            <person name="Teixeira E.C."/>
            <person name="Tezza R.I.D."/>
            <person name="Trindade dos Santos M."/>
            <person name="Truffi D."/>
            <person name="Tsai S.M."/>
            <person name="White F.F."/>
            <person name="Setubal J.C."/>
            <person name="Kitajima J.P."/>
        </authorList>
    </citation>
    <scope>NUCLEOTIDE SEQUENCE [LARGE SCALE GENOMIC DNA]</scope>
    <source>
        <strain>ATCC 33913 / DSM 3586 / NCPPB 528 / LMG 568 / P 25</strain>
    </source>
</reference>
<keyword id="KW-0028">Amino-acid biosynthesis</keyword>
<keyword id="KW-0368">Histidine biosynthesis</keyword>
<keyword id="KW-0378">Hydrolase</keyword>
<keyword id="KW-0486">Methionine biosynthesis</keyword>
<keyword id="KW-0511">Multifunctional enzyme</keyword>
<keyword id="KW-0521">NADP</keyword>
<keyword id="KW-0554">One-carbon metabolism</keyword>
<keyword id="KW-0560">Oxidoreductase</keyword>
<keyword id="KW-0658">Purine biosynthesis</keyword>
<keyword id="KW-1185">Reference proteome</keyword>
<protein>
    <recommendedName>
        <fullName evidence="1">Bifunctional protein FolD</fullName>
    </recommendedName>
    <domain>
        <recommendedName>
            <fullName evidence="1">Methylenetetrahydrofolate dehydrogenase</fullName>
            <ecNumber evidence="1">1.5.1.5</ecNumber>
        </recommendedName>
    </domain>
    <domain>
        <recommendedName>
            <fullName evidence="1">Methenyltetrahydrofolate cyclohydrolase</fullName>
            <ecNumber evidence="1">3.5.4.9</ecNumber>
        </recommendedName>
    </domain>
</protein>
<comment type="function">
    <text evidence="1">Catalyzes the oxidation of 5,10-methylenetetrahydrofolate to 5,10-methenyltetrahydrofolate and then the hydrolysis of 5,10-methenyltetrahydrofolate to 10-formyltetrahydrofolate.</text>
</comment>
<comment type="catalytic activity">
    <reaction evidence="1">
        <text>(6R)-5,10-methylene-5,6,7,8-tetrahydrofolate + NADP(+) = (6R)-5,10-methenyltetrahydrofolate + NADPH</text>
        <dbReference type="Rhea" id="RHEA:22812"/>
        <dbReference type="ChEBI" id="CHEBI:15636"/>
        <dbReference type="ChEBI" id="CHEBI:57455"/>
        <dbReference type="ChEBI" id="CHEBI:57783"/>
        <dbReference type="ChEBI" id="CHEBI:58349"/>
        <dbReference type="EC" id="1.5.1.5"/>
    </reaction>
</comment>
<comment type="catalytic activity">
    <reaction evidence="1">
        <text>(6R)-5,10-methenyltetrahydrofolate + H2O = (6R)-10-formyltetrahydrofolate + H(+)</text>
        <dbReference type="Rhea" id="RHEA:23700"/>
        <dbReference type="ChEBI" id="CHEBI:15377"/>
        <dbReference type="ChEBI" id="CHEBI:15378"/>
        <dbReference type="ChEBI" id="CHEBI:57455"/>
        <dbReference type="ChEBI" id="CHEBI:195366"/>
        <dbReference type="EC" id="3.5.4.9"/>
    </reaction>
</comment>
<comment type="pathway">
    <text evidence="1">One-carbon metabolism; tetrahydrofolate interconversion.</text>
</comment>
<comment type="subunit">
    <text evidence="1">Homodimer.</text>
</comment>
<comment type="similarity">
    <text evidence="1">Belongs to the tetrahydrofolate dehydrogenase/cyclohydrolase family.</text>
</comment>
<dbReference type="EC" id="1.5.1.5" evidence="1"/>
<dbReference type="EC" id="3.5.4.9" evidence="1"/>
<dbReference type="EMBL" id="AE008922">
    <property type="protein sequence ID" value="AAM41465.1"/>
    <property type="molecule type" value="Genomic_DNA"/>
</dbReference>
<dbReference type="RefSeq" id="NP_637541.1">
    <property type="nucleotide sequence ID" value="NC_003902.1"/>
</dbReference>
<dbReference type="RefSeq" id="WP_011037331.1">
    <property type="nucleotide sequence ID" value="NC_003902.1"/>
</dbReference>
<dbReference type="SMR" id="Q8P8Q4"/>
<dbReference type="STRING" id="190485.XCC2185"/>
<dbReference type="EnsemblBacteria" id="AAM41465">
    <property type="protein sequence ID" value="AAM41465"/>
    <property type="gene ID" value="XCC2185"/>
</dbReference>
<dbReference type="GeneID" id="58013244"/>
<dbReference type="KEGG" id="xcc:XCC2185"/>
<dbReference type="PATRIC" id="fig|190485.4.peg.2334"/>
<dbReference type="eggNOG" id="COG0190">
    <property type="taxonomic scope" value="Bacteria"/>
</dbReference>
<dbReference type="HOGENOM" id="CLU_034045_2_1_6"/>
<dbReference type="OrthoDB" id="9803580at2"/>
<dbReference type="UniPathway" id="UPA00193"/>
<dbReference type="Proteomes" id="UP000001010">
    <property type="component" value="Chromosome"/>
</dbReference>
<dbReference type="GO" id="GO:0005829">
    <property type="term" value="C:cytosol"/>
    <property type="evidence" value="ECO:0000318"/>
    <property type="project" value="GO_Central"/>
</dbReference>
<dbReference type="GO" id="GO:0004477">
    <property type="term" value="F:methenyltetrahydrofolate cyclohydrolase activity"/>
    <property type="evidence" value="ECO:0000318"/>
    <property type="project" value="GO_Central"/>
</dbReference>
<dbReference type="GO" id="GO:0004488">
    <property type="term" value="F:methylenetetrahydrofolate dehydrogenase (NADP+) activity"/>
    <property type="evidence" value="ECO:0000318"/>
    <property type="project" value="GO_Central"/>
</dbReference>
<dbReference type="GO" id="GO:0000105">
    <property type="term" value="P:L-histidine biosynthetic process"/>
    <property type="evidence" value="ECO:0007669"/>
    <property type="project" value="UniProtKB-KW"/>
</dbReference>
<dbReference type="GO" id="GO:0009086">
    <property type="term" value="P:methionine biosynthetic process"/>
    <property type="evidence" value="ECO:0007669"/>
    <property type="project" value="UniProtKB-KW"/>
</dbReference>
<dbReference type="GO" id="GO:0006164">
    <property type="term" value="P:purine nucleotide biosynthetic process"/>
    <property type="evidence" value="ECO:0007669"/>
    <property type="project" value="UniProtKB-KW"/>
</dbReference>
<dbReference type="GO" id="GO:0035999">
    <property type="term" value="P:tetrahydrofolate interconversion"/>
    <property type="evidence" value="ECO:0000318"/>
    <property type="project" value="GO_Central"/>
</dbReference>
<dbReference type="CDD" id="cd01080">
    <property type="entry name" value="NAD_bind_m-THF_DH_Cyclohyd"/>
    <property type="match status" value="1"/>
</dbReference>
<dbReference type="FunFam" id="3.40.50.720:FF:000006">
    <property type="entry name" value="Bifunctional protein FolD"/>
    <property type="match status" value="1"/>
</dbReference>
<dbReference type="FunFam" id="3.40.50.10860:FF:000005">
    <property type="entry name" value="C-1-tetrahydrofolate synthase, cytoplasmic, putative"/>
    <property type="match status" value="1"/>
</dbReference>
<dbReference type="Gene3D" id="3.40.50.10860">
    <property type="entry name" value="Leucine Dehydrogenase, chain A, domain 1"/>
    <property type="match status" value="1"/>
</dbReference>
<dbReference type="Gene3D" id="3.40.50.720">
    <property type="entry name" value="NAD(P)-binding Rossmann-like Domain"/>
    <property type="match status" value="1"/>
</dbReference>
<dbReference type="HAMAP" id="MF_01576">
    <property type="entry name" value="THF_DHG_CYH"/>
    <property type="match status" value="1"/>
</dbReference>
<dbReference type="InterPro" id="IPR046346">
    <property type="entry name" value="Aminoacid_DH-like_N_sf"/>
</dbReference>
<dbReference type="InterPro" id="IPR036291">
    <property type="entry name" value="NAD(P)-bd_dom_sf"/>
</dbReference>
<dbReference type="InterPro" id="IPR000672">
    <property type="entry name" value="THF_DH/CycHdrlase"/>
</dbReference>
<dbReference type="InterPro" id="IPR020630">
    <property type="entry name" value="THF_DH/CycHdrlase_cat_dom"/>
</dbReference>
<dbReference type="InterPro" id="IPR020867">
    <property type="entry name" value="THF_DH/CycHdrlase_CS"/>
</dbReference>
<dbReference type="InterPro" id="IPR020631">
    <property type="entry name" value="THF_DH/CycHdrlase_NAD-bd_dom"/>
</dbReference>
<dbReference type="NCBIfam" id="NF008058">
    <property type="entry name" value="PRK10792.1"/>
    <property type="match status" value="1"/>
</dbReference>
<dbReference type="PANTHER" id="PTHR48099:SF5">
    <property type="entry name" value="C-1-TETRAHYDROFOLATE SYNTHASE, CYTOPLASMIC"/>
    <property type="match status" value="1"/>
</dbReference>
<dbReference type="PANTHER" id="PTHR48099">
    <property type="entry name" value="C-1-TETRAHYDROFOLATE SYNTHASE, CYTOPLASMIC-RELATED"/>
    <property type="match status" value="1"/>
</dbReference>
<dbReference type="Pfam" id="PF00763">
    <property type="entry name" value="THF_DHG_CYH"/>
    <property type="match status" value="1"/>
</dbReference>
<dbReference type="Pfam" id="PF02882">
    <property type="entry name" value="THF_DHG_CYH_C"/>
    <property type="match status" value="1"/>
</dbReference>
<dbReference type="PRINTS" id="PR00085">
    <property type="entry name" value="THFDHDRGNASE"/>
</dbReference>
<dbReference type="SUPFAM" id="SSF53223">
    <property type="entry name" value="Aminoacid dehydrogenase-like, N-terminal domain"/>
    <property type="match status" value="1"/>
</dbReference>
<dbReference type="SUPFAM" id="SSF51735">
    <property type="entry name" value="NAD(P)-binding Rossmann-fold domains"/>
    <property type="match status" value="1"/>
</dbReference>
<dbReference type="PROSITE" id="PS00767">
    <property type="entry name" value="THF_DHG_CYH_2"/>
    <property type="match status" value="1"/>
</dbReference>
<evidence type="ECO:0000255" key="1">
    <source>
        <dbReference type="HAMAP-Rule" id="MF_01576"/>
    </source>
</evidence>
<feature type="chain" id="PRO_0000268566" description="Bifunctional protein FolD">
    <location>
        <begin position="1"/>
        <end position="294"/>
    </location>
</feature>
<feature type="binding site" evidence="1">
    <location>
        <begin position="175"/>
        <end position="177"/>
    </location>
    <ligand>
        <name>NADP(+)</name>
        <dbReference type="ChEBI" id="CHEBI:58349"/>
    </ligand>
</feature>
<feature type="binding site" evidence="1">
    <location>
        <position position="243"/>
    </location>
    <ligand>
        <name>NADP(+)</name>
        <dbReference type="ChEBI" id="CHEBI:58349"/>
    </ligand>
</feature>
<accession>Q8P8Q4</accession>
<gene>
    <name evidence="1" type="primary">folD</name>
    <name type="ordered locus">XCC2185</name>
</gene>
<organism>
    <name type="scientific">Xanthomonas campestris pv. campestris (strain ATCC 33913 / DSM 3586 / NCPPB 528 / LMG 568 / P 25)</name>
    <dbReference type="NCBI Taxonomy" id="190485"/>
    <lineage>
        <taxon>Bacteria</taxon>
        <taxon>Pseudomonadati</taxon>
        <taxon>Pseudomonadota</taxon>
        <taxon>Gammaproteobacteria</taxon>
        <taxon>Lysobacterales</taxon>
        <taxon>Lysobacteraceae</taxon>
        <taxon>Xanthomonas</taxon>
    </lineage>
</organism>
<sequence length="294" mass="30932">MTAPAPAALAPARLLDGRRIAEELLDGLKLRVDARLAAGKTRPGLAVVLVGGDPASSVYVRNKRRAAEKVGIEAFDYDLPQGTTEAELAALIDQLNTDPKIHGILIQLPLPGIPDANRLIQRIDPRKDVDGFHPQNVGHLALREFGLRPCTPRGIVTLLAHTDQPVRGRNATIVGVSNHVGRPMGLELLIAGCTVTSCHKFTPPDVLEASVRNADILVVAVGRPGLIPGEWVKPGAVVIDVGINRLDDGRLVGDVGFEAAAQRAGWITPVPGGVGPMTVATLMQNTLEAADAAG</sequence>
<name>FOLD_XANCP</name>
<proteinExistence type="inferred from homology"/>